<proteinExistence type="inferred from homology"/>
<protein>
    <recommendedName>
        <fullName>Growth-regulating factor 1</fullName>
        <shortName>OsGRF1</shortName>
    </recommendedName>
    <alternativeName>
        <fullName>Transcription activator GRF1</fullName>
    </alternativeName>
</protein>
<feature type="chain" id="PRO_0000419302" description="Growth-regulating factor 1">
    <location>
        <begin position="1"/>
        <end position="397"/>
    </location>
</feature>
<feature type="domain" description="QLQ" evidence="2">
    <location>
        <begin position="18"/>
        <end position="53"/>
    </location>
</feature>
<feature type="domain" description="WRC" evidence="3">
    <location>
        <begin position="90"/>
        <end position="134"/>
    </location>
</feature>
<feature type="region of interest" description="Disordered" evidence="4">
    <location>
        <begin position="117"/>
        <end position="176"/>
    </location>
</feature>
<feature type="short sequence motif" description="Bipartite nuclear localization signal" evidence="3">
    <location>
        <begin position="86"/>
        <end position="105"/>
    </location>
</feature>
<feature type="short sequence motif" description="Bipartite nuclear localization signal" evidence="3">
    <location>
        <begin position="123"/>
        <end position="130"/>
    </location>
</feature>
<feature type="compositionally biased region" description="Basic residues" evidence="4">
    <location>
        <begin position="120"/>
        <end position="129"/>
    </location>
</feature>
<feature type="compositionally biased region" description="Low complexity" evidence="4">
    <location>
        <begin position="144"/>
        <end position="174"/>
    </location>
</feature>
<feature type="sequence conflict" description="In Ref. 4; EAZ24805." evidence="5" ref="4">
    <original>H</original>
    <variation>D</variation>
    <location>
        <position position="357"/>
    </location>
</feature>
<sequence>MMMMSGRPSGGAGGGRYPFTASQWQELEHQALIYKYMASGTPIPSDLILPLRRSFLLDSALATSPSLAFPPQPSLGWGCFGMGFGRKAEDPEPGRCRRTDGKKWRCSKEAYPDSKYCEKHMHRGKNRSRKPVEMSLATPPPPSSSATSAASNTSAGVAPTTTTTSSPAPSYSRPAPHDAAPYQALYGGPYAAATARTPAAAAYHAQVSPFHLQLDTTHPHPPPSYYSMDHKEYAYGHATKEVHGEHAFFSDGTEREHHHAAAGHGQWQFKQLGMEPKQSTTPLFPGAGYGHTAASPYAIDLSKEDDDEKERRQQQQQQQQQHCFLLGADLRLEKPAGHDHAAAAQKPLRHFFDEWPHEKNSKGSWMGLEGETQLSMSIPMAANDLPITTTSRYHNDD</sequence>
<reference key="1">
    <citation type="journal article" date="2005" name="Nature">
        <title>The map-based sequence of the rice genome.</title>
        <authorList>
            <consortium name="International rice genome sequencing project (IRGSP)"/>
        </authorList>
    </citation>
    <scope>NUCLEOTIDE SEQUENCE [LARGE SCALE GENOMIC DNA]</scope>
    <source>
        <strain>cv. Nipponbare</strain>
    </source>
</reference>
<reference key="2">
    <citation type="journal article" date="2008" name="Nucleic Acids Res.">
        <title>The rice annotation project database (RAP-DB): 2008 update.</title>
        <authorList>
            <consortium name="The rice annotation project (RAP)"/>
        </authorList>
    </citation>
    <scope>GENOME REANNOTATION</scope>
    <source>
        <strain>cv. Nipponbare</strain>
    </source>
</reference>
<reference key="3">
    <citation type="journal article" date="2013" name="Rice">
        <title>Improvement of the Oryza sativa Nipponbare reference genome using next generation sequence and optical map data.</title>
        <authorList>
            <person name="Kawahara Y."/>
            <person name="de la Bastide M."/>
            <person name="Hamilton J.P."/>
            <person name="Kanamori H."/>
            <person name="McCombie W.R."/>
            <person name="Ouyang S."/>
            <person name="Schwartz D.C."/>
            <person name="Tanaka T."/>
            <person name="Wu J."/>
            <person name="Zhou S."/>
            <person name="Childs K.L."/>
            <person name="Davidson R.M."/>
            <person name="Lin H."/>
            <person name="Quesada-Ocampo L."/>
            <person name="Vaillancourt B."/>
            <person name="Sakai H."/>
            <person name="Lee S.S."/>
            <person name="Kim J."/>
            <person name="Numa H."/>
            <person name="Itoh T."/>
            <person name="Buell C.R."/>
            <person name="Matsumoto T."/>
        </authorList>
    </citation>
    <scope>GENOME REANNOTATION</scope>
    <source>
        <strain>cv. Nipponbare</strain>
    </source>
</reference>
<reference key="4">
    <citation type="journal article" date="2005" name="PLoS Biol.">
        <title>The genomes of Oryza sativa: a history of duplications.</title>
        <authorList>
            <person name="Yu J."/>
            <person name="Wang J."/>
            <person name="Lin W."/>
            <person name="Li S."/>
            <person name="Li H."/>
            <person name="Zhou J."/>
            <person name="Ni P."/>
            <person name="Dong W."/>
            <person name="Hu S."/>
            <person name="Zeng C."/>
            <person name="Zhang J."/>
            <person name="Zhang Y."/>
            <person name="Li R."/>
            <person name="Xu Z."/>
            <person name="Li S."/>
            <person name="Li X."/>
            <person name="Zheng H."/>
            <person name="Cong L."/>
            <person name="Lin L."/>
            <person name="Yin J."/>
            <person name="Geng J."/>
            <person name="Li G."/>
            <person name="Shi J."/>
            <person name="Liu J."/>
            <person name="Lv H."/>
            <person name="Li J."/>
            <person name="Wang J."/>
            <person name="Deng Y."/>
            <person name="Ran L."/>
            <person name="Shi X."/>
            <person name="Wang X."/>
            <person name="Wu Q."/>
            <person name="Li C."/>
            <person name="Ren X."/>
            <person name="Wang J."/>
            <person name="Wang X."/>
            <person name="Li D."/>
            <person name="Liu D."/>
            <person name="Zhang X."/>
            <person name="Ji Z."/>
            <person name="Zhao W."/>
            <person name="Sun Y."/>
            <person name="Zhang Z."/>
            <person name="Bao J."/>
            <person name="Han Y."/>
            <person name="Dong L."/>
            <person name="Ji J."/>
            <person name="Chen P."/>
            <person name="Wu S."/>
            <person name="Liu J."/>
            <person name="Xiao Y."/>
            <person name="Bu D."/>
            <person name="Tan J."/>
            <person name="Yang L."/>
            <person name="Ye C."/>
            <person name="Zhang J."/>
            <person name="Xu J."/>
            <person name="Zhou Y."/>
            <person name="Yu Y."/>
            <person name="Zhang B."/>
            <person name="Zhuang S."/>
            <person name="Wei H."/>
            <person name="Liu B."/>
            <person name="Lei M."/>
            <person name="Yu H."/>
            <person name="Li Y."/>
            <person name="Xu H."/>
            <person name="Wei S."/>
            <person name="He X."/>
            <person name="Fang L."/>
            <person name="Zhang Z."/>
            <person name="Zhang Y."/>
            <person name="Huang X."/>
            <person name="Su Z."/>
            <person name="Tong W."/>
            <person name="Li J."/>
            <person name="Tong Z."/>
            <person name="Li S."/>
            <person name="Ye J."/>
            <person name="Wang L."/>
            <person name="Fang L."/>
            <person name="Lei T."/>
            <person name="Chen C.-S."/>
            <person name="Chen H.-C."/>
            <person name="Xu Z."/>
            <person name="Li H."/>
            <person name="Huang H."/>
            <person name="Zhang F."/>
            <person name="Xu H."/>
            <person name="Li N."/>
            <person name="Zhao C."/>
            <person name="Li S."/>
            <person name="Dong L."/>
            <person name="Huang Y."/>
            <person name="Li L."/>
            <person name="Xi Y."/>
            <person name="Qi Q."/>
            <person name="Li W."/>
            <person name="Zhang B."/>
            <person name="Hu W."/>
            <person name="Zhang Y."/>
            <person name="Tian X."/>
            <person name="Jiao Y."/>
            <person name="Liang X."/>
            <person name="Jin J."/>
            <person name="Gao L."/>
            <person name="Zheng W."/>
            <person name="Hao B."/>
            <person name="Liu S.-M."/>
            <person name="Wang W."/>
            <person name="Yuan L."/>
            <person name="Cao M."/>
            <person name="McDermott J."/>
            <person name="Samudrala R."/>
            <person name="Wang J."/>
            <person name="Wong G.K.-S."/>
            <person name="Yang H."/>
        </authorList>
    </citation>
    <scope>NUCLEOTIDE SEQUENCE [LARGE SCALE GENOMIC DNA]</scope>
    <source>
        <strain>cv. Nipponbare</strain>
    </source>
</reference>
<reference key="5">
    <citation type="journal article" date="2004" name="Plant Cell Physiol.">
        <title>Whole genome analysis of the OsGRF gene family encoding plant-specific putative transcription activators in rice (Oryza sativa L.).</title>
        <authorList>
            <person name="Choi D."/>
            <person name="Kim J.H."/>
            <person name="Kende H."/>
        </authorList>
    </citation>
    <scope>IDENTIFICATION</scope>
    <scope>GENE FAMILY</scope>
    <source>
        <strain>cv. Nipponbare</strain>
    </source>
</reference>
<organism>
    <name type="scientific">Oryza sativa subsp. japonica</name>
    <name type="common">Rice</name>
    <dbReference type="NCBI Taxonomy" id="39947"/>
    <lineage>
        <taxon>Eukaryota</taxon>
        <taxon>Viridiplantae</taxon>
        <taxon>Streptophyta</taxon>
        <taxon>Embryophyta</taxon>
        <taxon>Tracheophyta</taxon>
        <taxon>Spermatophyta</taxon>
        <taxon>Magnoliopsida</taxon>
        <taxon>Liliopsida</taxon>
        <taxon>Poales</taxon>
        <taxon>Poaceae</taxon>
        <taxon>BOP clade</taxon>
        <taxon>Oryzoideae</taxon>
        <taxon>Oryzeae</taxon>
        <taxon>Oryzinae</taxon>
        <taxon>Oryza</taxon>
        <taxon>Oryza sativa</taxon>
    </lineage>
</organism>
<accession>Q6AWY8</accession>
<accession>A0A0P0VQ61</accession>
<accession>A3ABW6</accession>
<accession>Q6YZ47</accession>
<gene>
    <name type="primary">GRF1</name>
    <name type="ordered locus">Os02g0776900</name>
    <name type="ordered locus">LOC_Os02g53690</name>
    <name type="ORF">OJ1534_E09.5</name>
    <name type="ORF">OsJ_08584</name>
    <name type="ORF">OSJNBb0013K01.39</name>
</gene>
<comment type="function">
    <text evidence="1">Transcription activator that plays a regulatory role in gibberellin-induced stem elongation.</text>
</comment>
<comment type="subcellular location">
    <subcellularLocation>
        <location evidence="3">Nucleus</location>
    </subcellularLocation>
</comment>
<comment type="domain">
    <text>The QLQ domain and WRC domain may be involved in protein-protein interaction and DNA-binding, respectively.</text>
</comment>
<comment type="similarity">
    <text evidence="5">Belongs to the GRF family.</text>
</comment>
<comment type="sequence caution" evidence="5">
    <conflict type="erroneous gene model prediction">
        <sequence resource="EMBL-CDS" id="BAD16965"/>
    </conflict>
</comment>
<comment type="sequence caution" evidence="5">
    <conflict type="erroneous gene model prediction">
        <sequence resource="EMBL-CDS" id="BAD17386"/>
    </conflict>
</comment>
<comment type="sequence caution" evidence="5">
    <conflict type="erroneous gene model prediction">
        <sequence resource="EMBL-CDS" id="EAZ24805"/>
    </conflict>
</comment>
<name>GRF1_ORYSJ</name>
<evidence type="ECO:0000250" key="1"/>
<evidence type="ECO:0000255" key="2">
    <source>
        <dbReference type="PROSITE-ProRule" id="PRU01001"/>
    </source>
</evidence>
<evidence type="ECO:0000255" key="3">
    <source>
        <dbReference type="PROSITE-ProRule" id="PRU01002"/>
    </source>
</evidence>
<evidence type="ECO:0000256" key="4">
    <source>
        <dbReference type="SAM" id="MobiDB-lite"/>
    </source>
</evidence>
<evidence type="ECO:0000305" key="5"/>
<dbReference type="EMBL" id="AP004140">
    <property type="protein sequence ID" value="BAD16965.1"/>
    <property type="status" value="ALT_SEQ"/>
    <property type="molecule type" value="Genomic_DNA"/>
</dbReference>
<dbReference type="EMBL" id="AP005538">
    <property type="protein sequence ID" value="BAD17386.1"/>
    <property type="status" value="ALT_SEQ"/>
    <property type="molecule type" value="Genomic_DNA"/>
</dbReference>
<dbReference type="EMBL" id="AP008208">
    <property type="protein sequence ID" value="BAF10202.1"/>
    <property type="molecule type" value="Genomic_DNA"/>
</dbReference>
<dbReference type="EMBL" id="AP014958">
    <property type="protein sequence ID" value="BAS81176.1"/>
    <property type="molecule type" value="Genomic_DNA"/>
</dbReference>
<dbReference type="EMBL" id="CM000139">
    <property type="protein sequence ID" value="EAZ24805.1"/>
    <property type="status" value="ALT_SEQ"/>
    <property type="molecule type" value="Genomic_DNA"/>
</dbReference>
<dbReference type="EMBL" id="BK004856">
    <property type="protein sequence ID" value="DAA05205.1"/>
    <property type="molecule type" value="Genomic_DNA"/>
</dbReference>
<dbReference type="RefSeq" id="XP_015624121.1">
    <property type="nucleotide sequence ID" value="XM_015768635.1"/>
</dbReference>
<dbReference type="FunCoup" id="Q6AWY8">
    <property type="interactions" value="994"/>
</dbReference>
<dbReference type="STRING" id="39947.Q6AWY8"/>
<dbReference type="PaxDb" id="39947-Q6AWY8"/>
<dbReference type="EnsemblPlants" id="Os02t0776900-01">
    <property type="protein sequence ID" value="Os02t0776900-01"/>
    <property type="gene ID" value="Os02g0776900"/>
</dbReference>
<dbReference type="Gramene" id="Os02t0776900-01">
    <property type="protein sequence ID" value="Os02t0776900-01"/>
    <property type="gene ID" value="Os02g0776900"/>
</dbReference>
<dbReference type="KEGG" id="dosa:Os02g0776900"/>
<dbReference type="eggNOG" id="ENOG502RAHZ">
    <property type="taxonomic scope" value="Eukaryota"/>
</dbReference>
<dbReference type="HOGENOM" id="CLU_037908_0_0_1"/>
<dbReference type="InParanoid" id="Q6AWY8"/>
<dbReference type="OMA" id="AQKPLRH"/>
<dbReference type="OrthoDB" id="1927209at2759"/>
<dbReference type="Proteomes" id="UP000000763">
    <property type="component" value="Chromosome 2"/>
</dbReference>
<dbReference type="Proteomes" id="UP000007752">
    <property type="component" value="Chromosome 2"/>
</dbReference>
<dbReference type="Proteomes" id="UP000059680">
    <property type="component" value="Chromosome 2"/>
</dbReference>
<dbReference type="ExpressionAtlas" id="Q6AWY8">
    <property type="expression patterns" value="baseline and differential"/>
</dbReference>
<dbReference type="GO" id="GO:0005634">
    <property type="term" value="C:nucleus"/>
    <property type="evidence" value="ECO:0007669"/>
    <property type="project" value="UniProtKB-SubCell"/>
</dbReference>
<dbReference type="GO" id="GO:0005524">
    <property type="term" value="F:ATP binding"/>
    <property type="evidence" value="ECO:0007669"/>
    <property type="project" value="InterPro"/>
</dbReference>
<dbReference type="GO" id="GO:0032502">
    <property type="term" value="P:developmental process"/>
    <property type="evidence" value="ECO:0007669"/>
    <property type="project" value="InterPro"/>
</dbReference>
<dbReference type="GO" id="GO:0006351">
    <property type="term" value="P:DNA-templated transcription"/>
    <property type="evidence" value="ECO:0007669"/>
    <property type="project" value="InterPro"/>
</dbReference>
<dbReference type="GO" id="GO:0006355">
    <property type="term" value="P:regulation of DNA-templated transcription"/>
    <property type="evidence" value="ECO:0007669"/>
    <property type="project" value="InterPro"/>
</dbReference>
<dbReference type="InterPro" id="IPR014978">
    <property type="entry name" value="Gln-Leu-Gln_QLQ"/>
</dbReference>
<dbReference type="InterPro" id="IPR031137">
    <property type="entry name" value="GRF"/>
</dbReference>
<dbReference type="InterPro" id="IPR014977">
    <property type="entry name" value="WRC_dom"/>
</dbReference>
<dbReference type="PANTHER" id="PTHR31602">
    <property type="entry name" value="GROWTH-REGULATING FACTOR 5"/>
    <property type="match status" value="1"/>
</dbReference>
<dbReference type="PANTHER" id="PTHR31602:SF46">
    <property type="entry name" value="GROWTH-REGULATING FACTOR 6"/>
    <property type="match status" value="1"/>
</dbReference>
<dbReference type="Pfam" id="PF08880">
    <property type="entry name" value="QLQ"/>
    <property type="match status" value="1"/>
</dbReference>
<dbReference type="Pfam" id="PF08879">
    <property type="entry name" value="WRC"/>
    <property type="match status" value="1"/>
</dbReference>
<dbReference type="SMART" id="SM00951">
    <property type="entry name" value="QLQ"/>
    <property type="match status" value="1"/>
</dbReference>
<dbReference type="PROSITE" id="PS51666">
    <property type="entry name" value="QLQ"/>
    <property type="match status" value="1"/>
</dbReference>
<dbReference type="PROSITE" id="PS51667">
    <property type="entry name" value="WRC"/>
    <property type="match status" value="1"/>
</dbReference>
<keyword id="KW-0010">Activator</keyword>
<keyword id="KW-0539">Nucleus</keyword>
<keyword id="KW-1185">Reference proteome</keyword>
<keyword id="KW-0804">Transcription</keyword>
<keyword id="KW-0805">Transcription regulation</keyword>